<comment type="function">
    <text evidence="1">Serine/threonine protein kinase involved in the cytoplasm to vacuole transport (Cvt) and found to be essential in autophagy, where it is required for the formation of autophagosomes. Involved in the clearance of protein aggregates which cannot be efficiently cleared by the proteasome. Required for selective autophagic degradation of the nucleus (nucleophagy) as well as for mitophagy which contributes to regulate mitochondrial quantity and quality by eliminating the mitochondria to a basal level to fulfill cellular energy requirements and preventing excess ROS production. Also involved in endoplasmic reticulum-specific autophagic process, in selective removal of ER-associated degradation (ERAD) substrates. Plays a key role in ATG9 and ATG23 cycling through the pre-autophagosomal structure and is necessary to promote ATG18 binding to ATG9 through phosphorylation of ATG9. Catalyzes phosphorylation of ATG4, decreasing the interaction between ATG4 and ATG8 and impairing deconjugation of PE-conjugated forms of ATG8.</text>
</comment>
<comment type="catalytic activity">
    <reaction evidence="1">
        <text>L-seryl-[protein] + ATP = O-phospho-L-seryl-[protein] + ADP + H(+)</text>
        <dbReference type="Rhea" id="RHEA:17989"/>
        <dbReference type="Rhea" id="RHEA-COMP:9863"/>
        <dbReference type="Rhea" id="RHEA-COMP:11604"/>
        <dbReference type="ChEBI" id="CHEBI:15378"/>
        <dbReference type="ChEBI" id="CHEBI:29999"/>
        <dbReference type="ChEBI" id="CHEBI:30616"/>
        <dbReference type="ChEBI" id="CHEBI:83421"/>
        <dbReference type="ChEBI" id="CHEBI:456216"/>
        <dbReference type="EC" id="2.7.11.1"/>
    </reaction>
</comment>
<comment type="catalytic activity">
    <reaction evidence="1">
        <text>L-threonyl-[protein] + ATP = O-phospho-L-threonyl-[protein] + ADP + H(+)</text>
        <dbReference type="Rhea" id="RHEA:46608"/>
        <dbReference type="Rhea" id="RHEA-COMP:11060"/>
        <dbReference type="Rhea" id="RHEA-COMP:11605"/>
        <dbReference type="ChEBI" id="CHEBI:15378"/>
        <dbReference type="ChEBI" id="CHEBI:30013"/>
        <dbReference type="ChEBI" id="CHEBI:30616"/>
        <dbReference type="ChEBI" id="CHEBI:61977"/>
        <dbReference type="ChEBI" id="CHEBI:456216"/>
        <dbReference type="EC" id="2.7.11.1"/>
    </reaction>
</comment>
<comment type="subunit">
    <text evidence="1">Homodimer. Forms a ternary complex with ATG13 and ATG17.</text>
</comment>
<comment type="subcellular location">
    <subcellularLocation>
        <location evidence="1">Cytoplasm</location>
    </subcellularLocation>
    <subcellularLocation>
        <location evidence="1">Preautophagosomal structure membrane</location>
        <topology evidence="1">Peripheral membrane protein</topology>
    </subcellularLocation>
</comment>
<comment type="similarity">
    <text evidence="2">Belongs to the protein kinase superfamily. Ser/Thr protein kinase family. APG1/unc-51/ULK1 subfamily.</text>
</comment>
<evidence type="ECO:0000250" key="1">
    <source>
        <dbReference type="UniProtKB" id="P53104"/>
    </source>
</evidence>
<evidence type="ECO:0000255" key="2">
    <source>
        <dbReference type="PROSITE-ProRule" id="PRU00159"/>
    </source>
</evidence>
<evidence type="ECO:0000255" key="3">
    <source>
        <dbReference type="PROSITE-ProRule" id="PRU10027"/>
    </source>
</evidence>
<evidence type="ECO:0000256" key="4">
    <source>
        <dbReference type="SAM" id="MobiDB-lite"/>
    </source>
</evidence>
<evidence type="ECO:0000303" key="5">
    <source>
    </source>
</evidence>
<proteinExistence type="inferred from homology"/>
<gene>
    <name evidence="1" type="primary">atg1</name>
    <name evidence="5" type="ORF">An04g03950</name>
</gene>
<name>ATG1_ASPNC</name>
<accession>A2QIL5</accession>
<sequence>MGLFHHSTLFLPLLRRSNEGPHGEMPIGHYTRLSEIGRGSFAVVYKGVHTRSRTYVAIKSVTMTKLSRKLKENLASEISILKQLHHPHIVALLDCHDTTSNIHLVMEFCALGDLSHFIKGRNTLQDSPYTRELIAKYPNPGEGAGLNEVIVRHFLKQLSSALRFLRDRDLIHRDIKPQNLLLCPAPSSYRSGAADVVPFKSSEDSFSPKTGLESLPMLKLADFGFARSLPATSLAETLCGSPLYMAPEILRYEKYDAKADLWSVGTVLYEMVVGRAPFRAVNHIELIKKIEQNKDQISFPSKNRVSEDIRELIRGLLKQHPMDRMNFDVYFAHKVLTEPIPGLVADDAPLGRSPADPTPRPGSGSRRSTPVQMKRENALSGGVRDEPATYPAAQRAMTQSPRPETPSTPMRRTGSAGTPHAAPNEPTPPASHPTRPSPVSLATAPGRQEHVDRPPTTTVVEQQRRRTASSGVPQVDKPVEKAKDEKEHAAQEVAFERDYVLVEKRAVEMNAFADELAYNPRMQGGQAGAVSRRSGAAPGTPPAGGSSPHASPSKAMQIISGRSRADSAHVRQNSYDRRYGQSPTSATSAISKALNMASGRLFGMSFSPPLTITKGGRSPPLAYNPFPAYPSAQTSLIVHADGGKPGANLDEDSKTVHDLEECATRSDVVYGFAEVKYKQLIPLAPSAATGYPGDPGSDAVDSADGGLTVDAIVTLSEEALVLYVKALSLLAKSMDIARVWWTRKSRGDTLSRADTGSTVAGNRINNVVQWVRNRFNEVLEKAEFVRLKLVEAQKRLPSDHPSHPSNLSVGSSLGSGTSADVVVSPDVTAEKLMYERALEMSRVAAINEITGEDLAGCEISYVTAIRMLEAILDDVEVSRPGQSGGADRADARRDNEDGGQNEPQAVILAKSANAWHSDIENPESPGVAPEEAGAAVESVHAPVQWTGQNAAVESGASLPCSGSHAAEIRTLTVRSMQDHAHFAPLLFSIFISSYSSSISCPSSCGHC</sequence>
<protein>
    <recommendedName>
        <fullName evidence="1">Serine/threonine-protein kinase atg1</fullName>
        <ecNumber evidence="1">2.7.11.1</ecNumber>
    </recommendedName>
    <alternativeName>
        <fullName evidence="1">Autophagy-related protein 1</fullName>
    </alternativeName>
</protein>
<reference key="1">
    <citation type="journal article" date="2007" name="Nat. Biotechnol.">
        <title>Genome sequencing and analysis of the versatile cell factory Aspergillus niger CBS 513.88.</title>
        <authorList>
            <person name="Pel H.J."/>
            <person name="de Winde J.H."/>
            <person name="Archer D.B."/>
            <person name="Dyer P.S."/>
            <person name="Hofmann G."/>
            <person name="Schaap P.J."/>
            <person name="Turner G."/>
            <person name="de Vries R.P."/>
            <person name="Albang R."/>
            <person name="Albermann K."/>
            <person name="Andersen M.R."/>
            <person name="Bendtsen J.D."/>
            <person name="Benen J.A.E."/>
            <person name="van den Berg M."/>
            <person name="Breestraat S."/>
            <person name="Caddick M.X."/>
            <person name="Contreras R."/>
            <person name="Cornell M."/>
            <person name="Coutinho P.M."/>
            <person name="Danchin E.G.J."/>
            <person name="Debets A.J.M."/>
            <person name="Dekker P."/>
            <person name="van Dijck P.W.M."/>
            <person name="van Dijk A."/>
            <person name="Dijkhuizen L."/>
            <person name="Driessen A.J.M."/>
            <person name="d'Enfert C."/>
            <person name="Geysens S."/>
            <person name="Goosen C."/>
            <person name="Groot G.S.P."/>
            <person name="de Groot P.W.J."/>
            <person name="Guillemette T."/>
            <person name="Henrissat B."/>
            <person name="Herweijer M."/>
            <person name="van den Hombergh J.P.T.W."/>
            <person name="van den Hondel C.A.M.J.J."/>
            <person name="van der Heijden R.T.J.M."/>
            <person name="van der Kaaij R.M."/>
            <person name="Klis F.M."/>
            <person name="Kools H.J."/>
            <person name="Kubicek C.P."/>
            <person name="van Kuyk P.A."/>
            <person name="Lauber J."/>
            <person name="Lu X."/>
            <person name="van der Maarel M.J.E.C."/>
            <person name="Meulenberg R."/>
            <person name="Menke H."/>
            <person name="Mortimer M.A."/>
            <person name="Nielsen J."/>
            <person name="Oliver S.G."/>
            <person name="Olsthoorn M."/>
            <person name="Pal K."/>
            <person name="van Peij N.N.M.E."/>
            <person name="Ram A.F.J."/>
            <person name="Rinas U."/>
            <person name="Roubos J.A."/>
            <person name="Sagt C.M.J."/>
            <person name="Schmoll M."/>
            <person name="Sun J."/>
            <person name="Ussery D."/>
            <person name="Varga J."/>
            <person name="Vervecken W."/>
            <person name="van de Vondervoort P.J.J."/>
            <person name="Wedler H."/>
            <person name="Woesten H.A.B."/>
            <person name="Zeng A.-P."/>
            <person name="van Ooyen A.J.J."/>
            <person name="Visser J."/>
            <person name="Stam H."/>
        </authorList>
    </citation>
    <scope>NUCLEOTIDE SEQUENCE [LARGE SCALE GENOMIC DNA]</scope>
    <source>
        <strain>ATCC MYA-4892 / CBS 513.88 / FGSC A1513</strain>
    </source>
</reference>
<dbReference type="EC" id="2.7.11.1" evidence="1"/>
<dbReference type="EMBL" id="AM270075">
    <property type="protein sequence ID" value="CAK38659.1"/>
    <property type="molecule type" value="Genomic_DNA"/>
</dbReference>
<dbReference type="SMR" id="A2QIL5"/>
<dbReference type="EnsemblFungi" id="CAK38659">
    <property type="protein sequence ID" value="CAK38659"/>
    <property type="gene ID" value="An04g03950"/>
</dbReference>
<dbReference type="VEuPathDB" id="FungiDB:An04g03950"/>
<dbReference type="HOGENOM" id="CLU_006447_0_0_1"/>
<dbReference type="Proteomes" id="UP000006706">
    <property type="component" value="Chromosome 6L"/>
</dbReference>
<dbReference type="GO" id="GO:0005776">
    <property type="term" value="C:autophagosome"/>
    <property type="evidence" value="ECO:0007669"/>
    <property type="project" value="TreeGrafter"/>
</dbReference>
<dbReference type="GO" id="GO:0005829">
    <property type="term" value="C:cytosol"/>
    <property type="evidence" value="ECO:0007669"/>
    <property type="project" value="TreeGrafter"/>
</dbReference>
<dbReference type="GO" id="GO:0034045">
    <property type="term" value="C:phagophore assembly site membrane"/>
    <property type="evidence" value="ECO:0007669"/>
    <property type="project" value="UniProtKB-SubCell"/>
</dbReference>
<dbReference type="GO" id="GO:0005524">
    <property type="term" value="F:ATP binding"/>
    <property type="evidence" value="ECO:0007669"/>
    <property type="project" value="UniProtKB-KW"/>
</dbReference>
<dbReference type="GO" id="GO:0106310">
    <property type="term" value="F:protein serine kinase activity"/>
    <property type="evidence" value="ECO:0007669"/>
    <property type="project" value="RHEA"/>
</dbReference>
<dbReference type="GO" id="GO:0004674">
    <property type="term" value="F:protein serine/threonine kinase activity"/>
    <property type="evidence" value="ECO:0007669"/>
    <property type="project" value="UniProtKB-KW"/>
</dbReference>
<dbReference type="GO" id="GO:0000045">
    <property type="term" value="P:autophagosome assembly"/>
    <property type="evidence" value="ECO:0007669"/>
    <property type="project" value="TreeGrafter"/>
</dbReference>
<dbReference type="GO" id="GO:0006914">
    <property type="term" value="P:autophagy"/>
    <property type="evidence" value="ECO:0000315"/>
    <property type="project" value="AspGD"/>
</dbReference>
<dbReference type="GO" id="GO:0000422">
    <property type="term" value="P:autophagy of mitochondrion"/>
    <property type="evidence" value="ECO:0007669"/>
    <property type="project" value="TreeGrafter"/>
</dbReference>
<dbReference type="GO" id="GO:0034599">
    <property type="term" value="P:cellular response to oxidative stress"/>
    <property type="evidence" value="ECO:0000315"/>
    <property type="project" value="AspGD"/>
</dbReference>
<dbReference type="GO" id="GO:0034727">
    <property type="term" value="P:piecemeal microautophagy of the nucleus"/>
    <property type="evidence" value="ECO:0007669"/>
    <property type="project" value="TreeGrafter"/>
</dbReference>
<dbReference type="GO" id="GO:0015031">
    <property type="term" value="P:protein transport"/>
    <property type="evidence" value="ECO:0007669"/>
    <property type="project" value="UniProtKB-KW"/>
</dbReference>
<dbReference type="GO" id="GO:0010506">
    <property type="term" value="P:regulation of autophagy"/>
    <property type="evidence" value="ECO:0007669"/>
    <property type="project" value="InterPro"/>
</dbReference>
<dbReference type="GO" id="GO:0042594">
    <property type="term" value="P:response to starvation"/>
    <property type="evidence" value="ECO:0007669"/>
    <property type="project" value="TreeGrafter"/>
</dbReference>
<dbReference type="GO" id="GO:0061709">
    <property type="term" value="P:reticulophagy"/>
    <property type="evidence" value="ECO:0007669"/>
    <property type="project" value="TreeGrafter"/>
</dbReference>
<dbReference type="CDD" id="cd14009">
    <property type="entry name" value="STKc_ATG1_ULK_like"/>
    <property type="match status" value="1"/>
</dbReference>
<dbReference type="FunFam" id="1.10.510.10:FF:000817">
    <property type="entry name" value="Serine/threonine-protein kinase ATG1"/>
    <property type="match status" value="1"/>
</dbReference>
<dbReference type="FunFam" id="3.30.200.20:FF:000399">
    <property type="entry name" value="Serine/threonine-protein kinase atg1"/>
    <property type="match status" value="1"/>
</dbReference>
<dbReference type="Gene3D" id="3.30.200.20">
    <property type="entry name" value="Phosphorylase Kinase, domain 1"/>
    <property type="match status" value="1"/>
</dbReference>
<dbReference type="Gene3D" id="1.10.510.10">
    <property type="entry name" value="Transferase(Phosphotransferase) domain 1"/>
    <property type="match status" value="1"/>
</dbReference>
<dbReference type="InterPro" id="IPR045269">
    <property type="entry name" value="Atg1-like"/>
</dbReference>
<dbReference type="InterPro" id="IPR048941">
    <property type="entry name" value="ATG1-like_MIT2"/>
</dbReference>
<dbReference type="InterPro" id="IPR022708">
    <property type="entry name" value="Atg1-like_tMIT"/>
</dbReference>
<dbReference type="InterPro" id="IPR011009">
    <property type="entry name" value="Kinase-like_dom_sf"/>
</dbReference>
<dbReference type="InterPro" id="IPR000719">
    <property type="entry name" value="Prot_kinase_dom"/>
</dbReference>
<dbReference type="InterPro" id="IPR017441">
    <property type="entry name" value="Protein_kinase_ATP_BS"/>
</dbReference>
<dbReference type="InterPro" id="IPR008271">
    <property type="entry name" value="Ser/Thr_kinase_AS"/>
</dbReference>
<dbReference type="PANTHER" id="PTHR24348:SF22">
    <property type="entry name" value="NON-SPECIFIC SERINE_THREONINE PROTEIN KINASE"/>
    <property type="match status" value="1"/>
</dbReference>
<dbReference type="PANTHER" id="PTHR24348">
    <property type="entry name" value="SERINE/THREONINE-PROTEIN KINASE UNC-51-RELATED"/>
    <property type="match status" value="1"/>
</dbReference>
<dbReference type="Pfam" id="PF12063">
    <property type="entry name" value="ATG1-like_MIT1"/>
    <property type="match status" value="1"/>
</dbReference>
<dbReference type="Pfam" id="PF21127">
    <property type="entry name" value="ATG1-like_MIT2"/>
    <property type="match status" value="1"/>
</dbReference>
<dbReference type="Pfam" id="PF00069">
    <property type="entry name" value="Pkinase"/>
    <property type="match status" value="1"/>
</dbReference>
<dbReference type="SMART" id="SM00220">
    <property type="entry name" value="S_TKc"/>
    <property type="match status" value="1"/>
</dbReference>
<dbReference type="SUPFAM" id="SSF56112">
    <property type="entry name" value="Protein kinase-like (PK-like)"/>
    <property type="match status" value="1"/>
</dbReference>
<dbReference type="PROSITE" id="PS00107">
    <property type="entry name" value="PROTEIN_KINASE_ATP"/>
    <property type="match status" value="1"/>
</dbReference>
<dbReference type="PROSITE" id="PS50011">
    <property type="entry name" value="PROTEIN_KINASE_DOM"/>
    <property type="match status" value="1"/>
</dbReference>
<dbReference type="PROSITE" id="PS00108">
    <property type="entry name" value="PROTEIN_KINASE_ST"/>
    <property type="match status" value="1"/>
</dbReference>
<keyword id="KW-0067">ATP-binding</keyword>
<keyword id="KW-0072">Autophagy</keyword>
<keyword id="KW-0963">Cytoplasm</keyword>
<keyword id="KW-0418">Kinase</keyword>
<keyword id="KW-0472">Membrane</keyword>
<keyword id="KW-0547">Nucleotide-binding</keyword>
<keyword id="KW-0653">Protein transport</keyword>
<keyword id="KW-1185">Reference proteome</keyword>
<keyword id="KW-0723">Serine/threonine-protein kinase</keyword>
<keyword id="KW-0808">Transferase</keyword>
<keyword id="KW-0813">Transport</keyword>
<organism>
    <name type="scientific">Aspergillus niger (strain ATCC MYA-4892 / CBS 513.88 / FGSC A1513)</name>
    <dbReference type="NCBI Taxonomy" id="425011"/>
    <lineage>
        <taxon>Eukaryota</taxon>
        <taxon>Fungi</taxon>
        <taxon>Dikarya</taxon>
        <taxon>Ascomycota</taxon>
        <taxon>Pezizomycotina</taxon>
        <taxon>Eurotiomycetes</taxon>
        <taxon>Eurotiomycetidae</taxon>
        <taxon>Eurotiales</taxon>
        <taxon>Aspergillaceae</taxon>
        <taxon>Aspergillus</taxon>
        <taxon>Aspergillus subgen. Circumdati</taxon>
    </lineage>
</organism>
<feature type="chain" id="PRO_0000317788" description="Serine/threonine-protein kinase atg1">
    <location>
        <begin position="1"/>
        <end position="1007"/>
    </location>
</feature>
<feature type="domain" description="Protein kinase" evidence="2">
    <location>
        <begin position="30"/>
        <end position="336"/>
    </location>
</feature>
<feature type="region of interest" description="Disordered" evidence="4">
    <location>
        <begin position="343"/>
        <end position="489"/>
    </location>
</feature>
<feature type="region of interest" description="Disordered" evidence="4">
    <location>
        <begin position="524"/>
        <end position="586"/>
    </location>
</feature>
<feature type="region of interest" description="Disordered" evidence="4">
    <location>
        <begin position="795"/>
        <end position="817"/>
    </location>
</feature>
<feature type="region of interest" description="Disordered" evidence="4">
    <location>
        <begin position="878"/>
        <end position="900"/>
    </location>
</feature>
<feature type="compositionally biased region" description="Basic and acidic residues" evidence="4">
    <location>
        <begin position="373"/>
        <end position="387"/>
    </location>
</feature>
<feature type="compositionally biased region" description="Polar residues" evidence="4">
    <location>
        <begin position="396"/>
        <end position="410"/>
    </location>
</feature>
<feature type="compositionally biased region" description="Basic and acidic residues" evidence="4">
    <location>
        <begin position="477"/>
        <end position="489"/>
    </location>
</feature>
<feature type="compositionally biased region" description="Low complexity" evidence="4">
    <location>
        <begin position="534"/>
        <end position="555"/>
    </location>
</feature>
<feature type="compositionally biased region" description="Basic and acidic residues" evidence="4">
    <location>
        <begin position="563"/>
        <end position="579"/>
    </location>
</feature>
<feature type="compositionally biased region" description="Low complexity" evidence="4">
    <location>
        <begin position="805"/>
        <end position="817"/>
    </location>
</feature>
<feature type="compositionally biased region" description="Basic and acidic residues" evidence="4">
    <location>
        <begin position="887"/>
        <end position="896"/>
    </location>
</feature>
<feature type="active site" description="Proton acceptor" evidence="2 3">
    <location>
        <position position="174"/>
    </location>
</feature>
<feature type="binding site" evidence="2">
    <location>
        <begin position="36"/>
        <end position="44"/>
    </location>
    <ligand>
        <name>ATP</name>
        <dbReference type="ChEBI" id="CHEBI:30616"/>
    </ligand>
</feature>
<feature type="binding site" evidence="2">
    <location>
        <position position="59"/>
    </location>
    <ligand>
        <name>ATP</name>
        <dbReference type="ChEBI" id="CHEBI:30616"/>
    </ligand>
</feature>